<comment type="function">
    <text evidence="1">Catalyzes the reversible oxidation of malate to oxaloacetate.</text>
</comment>
<comment type="catalytic activity">
    <reaction evidence="1">
        <text>(S)-malate + NAD(+) = oxaloacetate + NADH + H(+)</text>
        <dbReference type="Rhea" id="RHEA:21432"/>
        <dbReference type="ChEBI" id="CHEBI:15378"/>
        <dbReference type="ChEBI" id="CHEBI:15589"/>
        <dbReference type="ChEBI" id="CHEBI:16452"/>
        <dbReference type="ChEBI" id="CHEBI:57540"/>
        <dbReference type="ChEBI" id="CHEBI:57945"/>
        <dbReference type="EC" id="1.1.1.37"/>
    </reaction>
</comment>
<comment type="subunit">
    <text evidence="1">Homodimer.</text>
</comment>
<comment type="similarity">
    <text evidence="1">Belongs to the LDH/MDH superfamily. MDH type 1 family.</text>
</comment>
<keyword id="KW-0520">NAD</keyword>
<keyword id="KW-0560">Oxidoreductase</keyword>
<keyword id="KW-1185">Reference proteome</keyword>
<keyword id="KW-0816">Tricarboxylic acid cycle</keyword>
<reference key="1">
    <citation type="submission" date="2008-02" db="EMBL/GenBank/DDBJ databases">
        <title>Complete sequence of Shewanella woodyi ATCC 51908.</title>
        <authorList>
            <consortium name="US DOE Joint Genome Institute"/>
            <person name="Copeland A."/>
            <person name="Lucas S."/>
            <person name="Lapidus A."/>
            <person name="Glavina del Rio T."/>
            <person name="Dalin E."/>
            <person name="Tice H."/>
            <person name="Bruce D."/>
            <person name="Goodwin L."/>
            <person name="Pitluck S."/>
            <person name="Sims D."/>
            <person name="Brettin T."/>
            <person name="Detter J.C."/>
            <person name="Han C."/>
            <person name="Kuske C.R."/>
            <person name="Schmutz J."/>
            <person name="Larimer F."/>
            <person name="Land M."/>
            <person name="Hauser L."/>
            <person name="Kyrpides N."/>
            <person name="Lykidis A."/>
            <person name="Zhao J.-S."/>
            <person name="Richardson P."/>
        </authorList>
    </citation>
    <scope>NUCLEOTIDE SEQUENCE [LARGE SCALE GENOMIC DNA]</scope>
    <source>
        <strain>ATCC 51908 / MS32</strain>
    </source>
</reference>
<dbReference type="EC" id="1.1.1.37" evidence="1"/>
<dbReference type="EMBL" id="CP000961">
    <property type="protein sequence ID" value="ACA85295.1"/>
    <property type="molecule type" value="Genomic_DNA"/>
</dbReference>
<dbReference type="RefSeq" id="WP_012323642.1">
    <property type="nucleotide sequence ID" value="NC_010506.1"/>
</dbReference>
<dbReference type="SMR" id="B1KGG7"/>
<dbReference type="STRING" id="392500.Swoo_1002"/>
<dbReference type="KEGG" id="swd:Swoo_1002"/>
<dbReference type="eggNOG" id="COG0039">
    <property type="taxonomic scope" value="Bacteria"/>
</dbReference>
<dbReference type="HOGENOM" id="CLU_047181_1_0_6"/>
<dbReference type="Proteomes" id="UP000002168">
    <property type="component" value="Chromosome"/>
</dbReference>
<dbReference type="GO" id="GO:0005737">
    <property type="term" value="C:cytoplasm"/>
    <property type="evidence" value="ECO:0007669"/>
    <property type="project" value="TreeGrafter"/>
</dbReference>
<dbReference type="GO" id="GO:0030060">
    <property type="term" value="F:L-malate dehydrogenase (NAD+) activity"/>
    <property type="evidence" value="ECO:0007669"/>
    <property type="project" value="UniProtKB-UniRule"/>
</dbReference>
<dbReference type="GO" id="GO:0006108">
    <property type="term" value="P:malate metabolic process"/>
    <property type="evidence" value="ECO:0007669"/>
    <property type="project" value="InterPro"/>
</dbReference>
<dbReference type="GO" id="GO:0006099">
    <property type="term" value="P:tricarboxylic acid cycle"/>
    <property type="evidence" value="ECO:0007669"/>
    <property type="project" value="UniProtKB-UniRule"/>
</dbReference>
<dbReference type="CDD" id="cd01337">
    <property type="entry name" value="MDH_glyoxysomal_mitochondrial"/>
    <property type="match status" value="1"/>
</dbReference>
<dbReference type="FunFam" id="3.40.50.720:FF:000017">
    <property type="entry name" value="Malate dehydrogenase"/>
    <property type="match status" value="1"/>
</dbReference>
<dbReference type="FunFam" id="3.90.110.10:FF:000001">
    <property type="entry name" value="Malate dehydrogenase"/>
    <property type="match status" value="1"/>
</dbReference>
<dbReference type="Gene3D" id="3.90.110.10">
    <property type="entry name" value="Lactate dehydrogenase/glycoside hydrolase, family 4, C-terminal"/>
    <property type="match status" value="1"/>
</dbReference>
<dbReference type="Gene3D" id="3.40.50.720">
    <property type="entry name" value="NAD(P)-binding Rossmann-like Domain"/>
    <property type="match status" value="1"/>
</dbReference>
<dbReference type="HAMAP" id="MF_01516">
    <property type="entry name" value="Malate_dehydrog_1"/>
    <property type="match status" value="1"/>
</dbReference>
<dbReference type="InterPro" id="IPR001557">
    <property type="entry name" value="L-lactate/malate_DH"/>
</dbReference>
<dbReference type="InterPro" id="IPR022383">
    <property type="entry name" value="Lactate/malate_DH_C"/>
</dbReference>
<dbReference type="InterPro" id="IPR001236">
    <property type="entry name" value="Lactate/malate_DH_N"/>
</dbReference>
<dbReference type="InterPro" id="IPR015955">
    <property type="entry name" value="Lactate_DH/Glyco_Ohase_4_C"/>
</dbReference>
<dbReference type="InterPro" id="IPR001252">
    <property type="entry name" value="Malate_DH_AS"/>
</dbReference>
<dbReference type="InterPro" id="IPR010097">
    <property type="entry name" value="Malate_DH_type1"/>
</dbReference>
<dbReference type="InterPro" id="IPR023958">
    <property type="entry name" value="Malate_DH_type1_bac"/>
</dbReference>
<dbReference type="InterPro" id="IPR036291">
    <property type="entry name" value="NAD(P)-bd_dom_sf"/>
</dbReference>
<dbReference type="NCBIfam" id="TIGR01772">
    <property type="entry name" value="MDH_euk_gproteo"/>
    <property type="match status" value="1"/>
</dbReference>
<dbReference type="PANTHER" id="PTHR11540">
    <property type="entry name" value="MALATE AND LACTATE DEHYDROGENASE"/>
    <property type="match status" value="1"/>
</dbReference>
<dbReference type="PANTHER" id="PTHR11540:SF16">
    <property type="entry name" value="MALATE DEHYDROGENASE, MITOCHONDRIAL"/>
    <property type="match status" value="1"/>
</dbReference>
<dbReference type="Pfam" id="PF02866">
    <property type="entry name" value="Ldh_1_C"/>
    <property type="match status" value="1"/>
</dbReference>
<dbReference type="Pfam" id="PF00056">
    <property type="entry name" value="Ldh_1_N"/>
    <property type="match status" value="1"/>
</dbReference>
<dbReference type="PIRSF" id="PIRSF000102">
    <property type="entry name" value="Lac_mal_DH"/>
    <property type="match status" value="1"/>
</dbReference>
<dbReference type="SUPFAM" id="SSF56327">
    <property type="entry name" value="LDH C-terminal domain-like"/>
    <property type="match status" value="1"/>
</dbReference>
<dbReference type="SUPFAM" id="SSF51735">
    <property type="entry name" value="NAD(P)-binding Rossmann-fold domains"/>
    <property type="match status" value="1"/>
</dbReference>
<dbReference type="PROSITE" id="PS00068">
    <property type="entry name" value="MDH"/>
    <property type="match status" value="1"/>
</dbReference>
<organism>
    <name type="scientific">Shewanella woodyi (strain ATCC 51908 / MS32)</name>
    <dbReference type="NCBI Taxonomy" id="392500"/>
    <lineage>
        <taxon>Bacteria</taxon>
        <taxon>Pseudomonadati</taxon>
        <taxon>Pseudomonadota</taxon>
        <taxon>Gammaproteobacteria</taxon>
        <taxon>Alteromonadales</taxon>
        <taxon>Shewanellaceae</taxon>
        <taxon>Shewanella</taxon>
    </lineage>
</organism>
<evidence type="ECO:0000255" key="1">
    <source>
        <dbReference type="HAMAP-Rule" id="MF_01516"/>
    </source>
</evidence>
<sequence>MKVAVLGAAGGIGQALALLLKTQLPADSKLSLYDIAPVTPGVAVDLSHIPTAVEVKGFAGQDPSPALEGADVVLISAGVARKPGMDRSDLFNINAGIVRNLVEKCAATCPKALIGIITNPVNTTVAIAAEVLKAAGVYDKNRLFGVTTLDVIRSETFVAEAKGLNVADVNVNVIGGHSGVTILPLLSQIEGVSFSDEEVAALTTRIQNAGTEVVEAKAGGGSATLSMGQAACRFGLSLVRGLQGEANVVECAYVDGGSEHAEFFAQPILLGKNGVEKVLAYGDVSEFEANARDAMLDTLNADIKLGVEFVK</sequence>
<name>MDH_SHEWM</name>
<feature type="chain" id="PRO_1000191598" description="Malate dehydrogenase">
    <location>
        <begin position="1"/>
        <end position="311"/>
    </location>
</feature>
<feature type="active site" description="Proton acceptor" evidence="1">
    <location>
        <position position="177"/>
    </location>
</feature>
<feature type="binding site" evidence="1">
    <location>
        <begin position="7"/>
        <end position="13"/>
    </location>
    <ligand>
        <name>NAD(+)</name>
        <dbReference type="ChEBI" id="CHEBI:57540"/>
    </ligand>
</feature>
<feature type="binding site" evidence="1">
    <location>
        <position position="34"/>
    </location>
    <ligand>
        <name>NAD(+)</name>
        <dbReference type="ChEBI" id="CHEBI:57540"/>
    </ligand>
</feature>
<feature type="binding site" evidence="1">
    <location>
        <position position="81"/>
    </location>
    <ligand>
        <name>substrate</name>
    </ligand>
</feature>
<feature type="binding site" evidence="1">
    <location>
        <position position="87"/>
    </location>
    <ligand>
        <name>substrate</name>
    </ligand>
</feature>
<feature type="binding site" evidence="1">
    <location>
        <position position="94"/>
    </location>
    <ligand>
        <name>NAD(+)</name>
        <dbReference type="ChEBI" id="CHEBI:57540"/>
    </ligand>
</feature>
<feature type="binding site" evidence="1">
    <location>
        <begin position="117"/>
        <end position="119"/>
    </location>
    <ligand>
        <name>NAD(+)</name>
        <dbReference type="ChEBI" id="CHEBI:57540"/>
    </ligand>
</feature>
<feature type="binding site" evidence="1">
    <location>
        <position position="119"/>
    </location>
    <ligand>
        <name>substrate</name>
    </ligand>
</feature>
<feature type="binding site" evidence="1">
    <location>
        <position position="153"/>
    </location>
    <ligand>
        <name>substrate</name>
    </ligand>
</feature>
<feature type="binding site" evidence="1">
    <location>
        <position position="227"/>
    </location>
    <ligand>
        <name>NAD(+)</name>
        <dbReference type="ChEBI" id="CHEBI:57540"/>
    </ligand>
</feature>
<accession>B1KGG7</accession>
<proteinExistence type="inferred from homology"/>
<gene>
    <name evidence="1" type="primary">mdh</name>
    <name type="ordered locus">Swoo_1002</name>
</gene>
<protein>
    <recommendedName>
        <fullName evidence="1">Malate dehydrogenase</fullName>
        <ecNumber evidence="1">1.1.1.37</ecNumber>
    </recommendedName>
</protein>